<accession>P0ADA2</accession>
<accession>P29679</accession>
<accession>P37331</accession>
<accession>P77125</accession>
<dbReference type="EC" id="3.1.2.2" evidence="1"/>
<dbReference type="EC" id="3.1.1.2" evidence="1"/>
<dbReference type="EC" id="3.1.1.5" evidence="1"/>
<dbReference type="EC" id="3.1.2.14" evidence="1"/>
<dbReference type="EC" id="3.4.21.-" evidence="1"/>
<dbReference type="EMBL" id="AE014075">
    <property type="protein sequence ID" value="AAN79092.1"/>
    <property type="status" value="ALT_INIT"/>
    <property type="molecule type" value="Genomic_DNA"/>
</dbReference>
<dbReference type="BMRB" id="P0ADA2"/>
<dbReference type="SMR" id="P0ADA2"/>
<dbReference type="STRING" id="199310.c0615"/>
<dbReference type="KEGG" id="ecc:c0615"/>
<dbReference type="eggNOG" id="COG2755">
    <property type="taxonomic scope" value="Bacteria"/>
</dbReference>
<dbReference type="HOGENOM" id="CLU_051180_3_0_6"/>
<dbReference type="Proteomes" id="UP000001410">
    <property type="component" value="Chromosome"/>
</dbReference>
<dbReference type="GO" id="GO:0042597">
    <property type="term" value="C:periplasmic space"/>
    <property type="evidence" value="ECO:0007669"/>
    <property type="project" value="UniProtKB-SubCell"/>
</dbReference>
<dbReference type="GO" id="GO:0004064">
    <property type="term" value="F:arylesterase activity"/>
    <property type="evidence" value="ECO:0007669"/>
    <property type="project" value="UniProtKB-EC"/>
</dbReference>
<dbReference type="GO" id="GO:0016297">
    <property type="term" value="F:fatty acyl-[ACP] hydrolase activity"/>
    <property type="evidence" value="ECO:0007669"/>
    <property type="project" value="UniProtKB-EC"/>
</dbReference>
<dbReference type="GO" id="GO:0047617">
    <property type="term" value="F:fatty acyl-CoA hydrolase activity"/>
    <property type="evidence" value="ECO:0007669"/>
    <property type="project" value="RHEA"/>
</dbReference>
<dbReference type="GO" id="GO:0004622">
    <property type="term" value="F:lysophospholipase activity"/>
    <property type="evidence" value="ECO:0007669"/>
    <property type="project" value="UniProtKB-EC"/>
</dbReference>
<dbReference type="GO" id="GO:0008233">
    <property type="term" value="F:peptidase activity"/>
    <property type="evidence" value="ECO:0007669"/>
    <property type="project" value="UniProtKB-KW"/>
</dbReference>
<dbReference type="GO" id="GO:0006629">
    <property type="term" value="P:lipid metabolic process"/>
    <property type="evidence" value="ECO:0007669"/>
    <property type="project" value="InterPro"/>
</dbReference>
<dbReference type="GO" id="GO:0006508">
    <property type="term" value="P:proteolysis"/>
    <property type="evidence" value="ECO:0007669"/>
    <property type="project" value="UniProtKB-KW"/>
</dbReference>
<dbReference type="CDD" id="cd01822">
    <property type="entry name" value="Lysophospholipase_L1_like"/>
    <property type="match status" value="1"/>
</dbReference>
<dbReference type="FunFam" id="3.40.50.1110:FF:000001">
    <property type="entry name" value="Multifunctional acyl-CoA thioesterase I"/>
    <property type="match status" value="1"/>
</dbReference>
<dbReference type="Gene3D" id="3.40.50.1110">
    <property type="entry name" value="SGNH hydrolase"/>
    <property type="match status" value="1"/>
</dbReference>
<dbReference type="InterPro" id="IPR051532">
    <property type="entry name" value="Ester_Hydrolysis_Enzymes"/>
</dbReference>
<dbReference type="InterPro" id="IPR008265">
    <property type="entry name" value="Lipase_GDSL_AS"/>
</dbReference>
<dbReference type="InterPro" id="IPR013830">
    <property type="entry name" value="SGNH_hydro"/>
</dbReference>
<dbReference type="InterPro" id="IPR036514">
    <property type="entry name" value="SGNH_hydro_sf"/>
</dbReference>
<dbReference type="NCBIfam" id="NF007819">
    <property type="entry name" value="PRK10528.1"/>
    <property type="match status" value="1"/>
</dbReference>
<dbReference type="PANTHER" id="PTHR30383">
    <property type="entry name" value="THIOESTERASE 1/PROTEASE 1/LYSOPHOSPHOLIPASE L1"/>
    <property type="match status" value="1"/>
</dbReference>
<dbReference type="PANTHER" id="PTHR30383:SF24">
    <property type="entry name" value="THIOESTERASE 1_PROTEASE 1_LYSOPHOSPHOLIPASE L1"/>
    <property type="match status" value="1"/>
</dbReference>
<dbReference type="Pfam" id="PF13472">
    <property type="entry name" value="Lipase_GDSL_2"/>
    <property type="match status" value="1"/>
</dbReference>
<dbReference type="SUPFAM" id="SSF52266">
    <property type="entry name" value="SGNH hydrolase"/>
    <property type="match status" value="1"/>
</dbReference>
<dbReference type="PROSITE" id="PS01098">
    <property type="entry name" value="LIPASE_GDSL_SER"/>
    <property type="match status" value="1"/>
</dbReference>
<name>TESA_ECOL6</name>
<gene>
    <name type="primary">tesA</name>
    <name type="ordered locus">c0615</name>
</gene>
<reference key="1">
    <citation type="journal article" date="2002" name="Proc. Natl. Acad. Sci. U.S.A.">
        <title>Extensive mosaic structure revealed by the complete genome sequence of uropathogenic Escherichia coli.</title>
        <authorList>
            <person name="Welch R.A."/>
            <person name="Burland V."/>
            <person name="Plunkett G. III"/>
            <person name="Redford P."/>
            <person name="Roesch P."/>
            <person name="Rasko D."/>
            <person name="Buckles E.L."/>
            <person name="Liou S.-R."/>
            <person name="Boutin A."/>
            <person name="Hackett J."/>
            <person name="Stroud D."/>
            <person name="Mayhew G.F."/>
            <person name="Rose D.J."/>
            <person name="Zhou S."/>
            <person name="Schwartz D.C."/>
            <person name="Perna N.T."/>
            <person name="Mobley H.L.T."/>
            <person name="Donnenberg M.S."/>
            <person name="Blattner F.R."/>
        </authorList>
    </citation>
    <scope>NUCLEOTIDE SEQUENCE [LARGE SCALE GENOMIC DNA]</scope>
    <source>
        <strain>CFT073 / ATCC 700928 / UPEC</strain>
    </source>
</reference>
<protein>
    <recommendedName>
        <fullName evidence="1">Thioesterase 1/protease 1/lysophospholipase L1</fullName>
        <shortName evidence="1">TAP</shortName>
    </recommendedName>
    <alternativeName>
        <fullName evidence="1">Acyl-CoA thioesterase 1</fullName>
        <shortName evidence="1">TESA</shortName>
        <ecNumber evidence="1">3.1.2.2</ecNumber>
    </alternativeName>
    <alternativeName>
        <fullName evidence="1">Acyl-CoA thioesterase I</fullName>
    </alternativeName>
    <alternativeName>
        <fullName evidence="1">Arylesterase</fullName>
        <ecNumber evidence="1">3.1.1.2</ecNumber>
    </alternativeName>
    <alternativeName>
        <fullName evidence="1">Lysophospholipase L1</fullName>
        <ecNumber evidence="1">3.1.1.5</ecNumber>
    </alternativeName>
    <alternativeName>
        <fullName evidence="1">Oleoyl-[acyl-carrier-protein] hydrolase</fullName>
        <ecNumber evidence="1">3.1.2.14</ecNumber>
    </alternativeName>
    <alternativeName>
        <fullName evidence="1">Phospholipid degradation C</fullName>
        <shortName evidence="1">Pldc</shortName>
    </alternativeName>
    <alternativeName>
        <fullName evidence="1">Protease 1</fullName>
        <ecNumber evidence="1">3.4.21.-</ecNumber>
    </alternativeName>
    <alternativeName>
        <fullName evidence="1">Protease I</fullName>
    </alternativeName>
    <alternativeName>
        <fullName evidence="1">Thioesterase I/protease I</fullName>
        <shortName evidence="1">TEP-I</shortName>
    </alternativeName>
</protein>
<comment type="function">
    <text evidence="1">TesA is a multifunctional esterase that can act as a thioesterase, arylesterase, lysophospholipase and protease.</text>
</comment>
<comment type="catalytic activity">
    <reaction evidence="1">
        <text>a fatty acyl-CoA + H2O = a fatty acid + CoA + H(+)</text>
        <dbReference type="Rhea" id="RHEA:16781"/>
        <dbReference type="ChEBI" id="CHEBI:15377"/>
        <dbReference type="ChEBI" id="CHEBI:15378"/>
        <dbReference type="ChEBI" id="CHEBI:28868"/>
        <dbReference type="ChEBI" id="CHEBI:57287"/>
        <dbReference type="ChEBI" id="CHEBI:77636"/>
    </reaction>
    <physiologicalReaction direction="left-to-right" evidence="1">
        <dbReference type="Rhea" id="RHEA:16782"/>
    </physiologicalReaction>
</comment>
<comment type="catalytic activity">
    <reaction evidence="1">
        <text>hexadecanoyl-CoA + H2O = hexadecanoate + CoA + H(+)</text>
        <dbReference type="Rhea" id="RHEA:16645"/>
        <dbReference type="ChEBI" id="CHEBI:7896"/>
        <dbReference type="ChEBI" id="CHEBI:15377"/>
        <dbReference type="ChEBI" id="CHEBI:15378"/>
        <dbReference type="ChEBI" id="CHEBI:57287"/>
        <dbReference type="ChEBI" id="CHEBI:57379"/>
        <dbReference type="EC" id="3.1.2.2"/>
    </reaction>
    <physiologicalReaction direction="left-to-right" evidence="1">
        <dbReference type="Rhea" id="RHEA:16646"/>
    </physiologicalReaction>
</comment>
<comment type="catalytic activity">
    <reaction evidence="1">
        <text>(9Z)-hexadecenoyl-CoA + H2O = (9Z)-hexadecenoate + CoA + H(+)</text>
        <dbReference type="Rhea" id="RHEA:40131"/>
        <dbReference type="ChEBI" id="CHEBI:15377"/>
        <dbReference type="ChEBI" id="CHEBI:15378"/>
        <dbReference type="ChEBI" id="CHEBI:32372"/>
        <dbReference type="ChEBI" id="CHEBI:57287"/>
        <dbReference type="ChEBI" id="CHEBI:61540"/>
    </reaction>
    <physiologicalReaction direction="left-to-right" evidence="1">
        <dbReference type="Rhea" id="RHEA:40132"/>
    </physiologicalReaction>
</comment>
<comment type="catalytic activity">
    <reaction evidence="1">
        <text>octadecanoyl-CoA + H2O = octadecanoate + CoA + H(+)</text>
        <dbReference type="Rhea" id="RHEA:30139"/>
        <dbReference type="ChEBI" id="CHEBI:15377"/>
        <dbReference type="ChEBI" id="CHEBI:15378"/>
        <dbReference type="ChEBI" id="CHEBI:25629"/>
        <dbReference type="ChEBI" id="CHEBI:57287"/>
        <dbReference type="ChEBI" id="CHEBI:57394"/>
    </reaction>
    <physiologicalReaction direction="left-to-right" evidence="1">
        <dbReference type="Rhea" id="RHEA:30140"/>
    </physiologicalReaction>
</comment>
<comment type="catalytic activity">
    <reaction evidence="1">
        <text>(9Z)-octadecenoyl-CoA + H2O = (9Z)-octadecenoate + CoA + H(+)</text>
        <dbReference type="Rhea" id="RHEA:40139"/>
        <dbReference type="ChEBI" id="CHEBI:15377"/>
        <dbReference type="ChEBI" id="CHEBI:15378"/>
        <dbReference type="ChEBI" id="CHEBI:30823"/>
        <dbReference type="ChEBI" id="CHEBI:57287"/>
        <dbReference type="ChEBI" id="CHEBI:57387"/>
    </reaction>
    <physiologicalReaction direction="left-to-right" evidence="1">
        <dbReference type="Rhea" id="RHEA:40140"/>
    </physiologicalReaction>
</comment>
<comment type="catalytic activity">
    <reaction evidence="1">
        <text>(9Z)-octadecenoyl-[ACP] + H2O = (9Z)-octadecenoate + holo-[ACP] + H(+)</text>
        <dbReference type="Rhea" id="RHEA:15057"/>
        <dbReference type="Rhea" id="RHEA-COMP:9685"/>
        <dbReference type="Rhea" id="RHEA-COMP:9924"/>
        <dbReference type="ChEBI" id="CHEBI:15377"/>
        <dbReference type="ChEBI" id="CHEBI:15378"/>
        <dbReference type="ChEBI" id="CHEBI:30823"/>
        <dbReference type="ChEBI" id="CHEBI:64479"/>
        <dbReference type="ChEBI" id="CHEBI:78783"/>
        <dbReference type="EC" id="3.1.2.14"/>
    </reaction>
    <physiologicalReaction direction="left-to-right" evidence="1">
        <dbReference type="Rhea" id="RHEA:15058"/>
    </physiologicalReaction>
</comment>
<comment type="catalytic activity">
    <reaction evidence="1">
        <text>(11Z)-octadecenoyl-CoA + H2O = (11Z)-octadecenoate + CoA + H(+)</text>
        <dbReference type="Rhea" id="RHEA:65240"/>
        <dbReference type="ChEBI" id="CHEBI:15377"/>
        <dbReference type="ChEBI" id="CHEBI:15378"/>
        <dbReference type="ChEBI" id="CHEBI:30827"/>
        <dbReference type="ChEBI" id="CHEBI:57287"/>
        <dbReference type="ChEBI" id="CHEBI:75121"/>
    </reaction>
    <physiologicalReaction direction="left-to-right" evidence="1">
        <dbReference type="Rhea" id="RHEA:65241"/>
    </physiologicalReaction>
</comment>
<comment type="catalytic activity">
    <reaction evidence="1">
        <text>tetradecanoyl-CoA + H2O = tetradecanoate + CoA + H(+)</text>
        <dbReference type="Rhea" id="RHEA:40119"/>
        <dbReference type="ChEBI" id="CHEBI:15377"/>
        <dbReference type="ChEBI" id="CHEBI:15378"/>
        <dbReference type="ChEBI" id="CHEBI:30807"/>
        <dbReference type="ChEBI" id="CHEBI:57287"/>
        <dbReference type="ChEBI" id="CHEBI:57385"/>
    </reaction>
    <physiologicalReaction direction="left-to-right" evidence="1">
        <dbReference type="Rhea" id="RHEA:40120"/>
    </physiologicalReaction>
</comment>
<comment type="catalytic activity">
    <reaction evidence="1">
        <text>(5Z,8Z,11Z,14Z)-eicosatetraenoyl-CoA + H2O = (5Z,8Z,11Z,14Z)-eicosatetraenoate + CoA + H(+)</text>
        <dbReference type="Rhea" id="RHEA:40151"/>
        <dbReference type="ChEBI" id="CHEBI:15377"/>
        <dbReference type="ChEBI" id="CHEBI:15378"/>
        <dbReference type="ChEBI" id="CHEBI:32395"/>
        <dbReference type="ChEBI" id="CHEBI:57287"/>
        <dbReference type="ChEBI" id="CHEBI:57368"/>
    </reaction>
    <physiologicalReaction direction="left-to-right" evidence="1">
        <dbReference type="Rhea" id="RHEA:40152"/>
    </physiologicalReaction>
</comment>
<comment type="catalytic activity">
    <reaction evidence="1">
        <text>dodecanoyl-CoA + H2O = dodecanoate + CoA + H(+)</text>
        <dbReference type="Rhea" id="RHEA:30135"/>
        <dbReference type="ChEBI" id="CHEBI:15377"/>
        <dbReference type="ChEBI" id="CHEBI:15378"/>
        <dbReference type="ChEBI" id="CHEBI:18262"/>
        <dbReference type="ChEBI" id="CHEBI:57287"/>
        <dbReference type="ChEBI" id="CHEBI:57375"/>
    </reaction>
    <physiologicalReaction direction="left-to-right" evidence="1">
        <dbReference type="Rhea" id="RHEA:30136"/>
    </physiologicalReaction>
</comment>
<comment type="catalytic activity">
    <reaction evidence="1">
        <text>decanoyl-CoA + H2O = decanoate + CoA + H(+)</text>
        <dbReference type="Rhea" id="RHEA:40059"/>
        <dbReference type="ChEBI" id="CHEBI:15377"/>
        <dbReference type="ChEBI" id="CHEBI:15378"/>
        <dbReference type="ChEBI" id="CHEBI:27689"/>
        <dbReference type="ChEBI" id="CHEBI:57287"/>
        <dbReference type="ChEBI" id="CHEBI:61430"/>
    </reaction>
    <physiologicalReaction direction="left-to-right" evidence="1">
        <dbReference type="Rhea" id="RHEA:40060"/>
    </physiologicalReaction>
</comment>
<comment type="catalytic activity">
    <reaction evidence="1">
        <text>hexanoyl-CoA + H2O = hexanoate + CoA + H(+)</text>
        <dbReference type="Rhea" id="RHEA:40115"/>
        <dbReference type="ChEBI" id="CHEBI:15377"/>
        <dbReference type="ChEBI" id="CHEBI:15378"/>
        <dbReference type="ChEBI" id="CHEBI:17120"/>
        <dbReference type="ChEBI" id="CHEBI:57287"/>
        <dbReference type="ChEBI" id="CHEBI:62620"/>
    </reaction>
    <physiologicalReaction direction="left-to-right" evidence="1">
        <dbReference type="Rhea" id="RHEA:40116"/>
    </physiologicalReaction>
</comment>
<comment type="catalytic activity">
    <reaction evidence="1">
        <text>a 1-acyl-sn-glycero-3-phosphocholine + H2O = sn-glycerol 3-phosphocholine + a fatty acid + H(+)</text>
        <dbReference type="Rhea" id="RHEA:15177"/>
        <dbReference type="ChEBI" id="CHEBI:15377"/>
        <dbReference type="ChEBI" id="CHEBI:15378"/>
        <dbReference type="ChEBI" id="CHEBI:16870"/>
        <dbReference type="ChEBI" id="CHEBI:28868"/>
        <dbReference type="ChEBI" id="CHEBI:58168"/>
        <dbReference type="EC" id="3.1.1.5"/>
    </reaction>
</comment>
<comment type="catalytic activity">
    <reaction evidence="1">
        <text>a phenyl acetate + H2O = a phenol + acetate + H(+)</text>
        <dbReference type="Rhea" id="RHEA:17309"/>
        <dbReference type="ChEBI" id="CHEBI:15377"/>
        <dbReference type="ChEBI" id="CHEBI:15378"/>
        <dbReference type="ChEBI" id="CHEBI:30089"/>
        <dbReference type="ChEBI" id="CHEBI:33853"/>
        <dbReference type="ChEBI" id="CHEBI:140310"/>
        <dbReference type="EC" id="3.1.1.2"/>
    </reaction>
</comment>
<comment type="catalytic activity">
    <reaction evidence="1">
        <text>a butanoate ester + H2O = an aliphatic alcohol + butanoate + H(+)</text>
        <dbReference type="Rhea" id="RHEA:47348"/>
        <dbReference type="ChEBI" id="CHEBI:2571"/>
        <dbReference type="ChEBI" id="CHEBI:15377"/>
        <dbReference type="ChEBI" id="CHEBI:15378"/>
        <dbReference type="ChEBI" id="CHEBI:17968"/>
        <dbReference type="ChEBI" id="CHEBI:50477"/>
    </reaction>
</comment>
<comment type="catalytic activity">
    <reaction evidence="1">
        <text>a hexanoate ester + H2O = an aliphatic alcohol + hexanoate + H(+)</text>
        <dbReference type="Rhea" id="RHEA:47352"/>
        <dbReference type="ChEBI" id="CHEBI:2571"/>
        <dbReference type="ChEBI" id="CHEBI:15377"/>
        <dbReference type="ChEBI" id="CHEBI:15378"/>
        <dbReference type="ChEBI" id="CHEBI:17120"/>
        <dbReference type="ChEBI" id="CHEBI:87656"/>
    </reaction>
</comment>
<comment type="catalytic activity">
    <reaction evidence="1">
        <text>an octanoate ester + H2O = an aliphatic alcohol + octanoate + H(+)</text>
        <dbReference type="Rhea" id="RHEA:47356"/>
        <dbReference type="ChEBI" id="CHEBI:2571"/>
        <dbReference type="ChEBI" id="CHEBI:15377"/>
        <dbReference type="ChEBI" id="CHEBI:15378"/>
        <dbReference type="ChEBI" id="CHEBI:25646"/>
        <dbReference type="ChEBI" id="CHEBI:87657"/>
    </reaction>
</comment>
<comment type="subunit">
    <text evidence="1">Monomer or homotetramer.</text>
</comment>
<comment type="subcellular location">
    <subcellularLocation>
        <location evidence="1">Periplasm</location>
    </subcellularLocation>
</comment>
<comment type="similarity">
    <text evidence="2">Belongs to the 'GDSL' lipolytic enzyme family.</text>
</comment>
<comment type="sequence caution" evidence="2">
    <conflict type="erroneous initiation">
        <sequence resource="EMBL-CDS" id="AAN79092"/>
    </conflict>
    <text>Extended N-terminus.</text>
</comment>
<evidence type="ECO:0000250" key="1">
    <source>
        <dbReference type="UniProtKB" id="P0ADA1"/>
    </source>
</evidence>
<evidence type="ECO:0000305" key="2"/>
<feature type="signal peptide" evidence="1">
    <location>
        <begin position="1"/>
        <end position="26"/>
    </location>
</feature>
<feature type="chain" id="PRO_0000043365" description="Thioesterase 1/protease 1/lysophospholipase L1">
    <location>
        <begin position="27"/>
        <end position="208"/>
    </location>
</feature>
<feature type="active site" description="Nucleophile" evidence="1">
    <location>
        <position position="36"/>
    </location>
</feature>
<feature type="active site" evidence="1">
    <location>
        <position position="180"/>
    </location>
</feature>
<feature type="active site" evidence="1">
    <location>
        <position position="183"/>
    </location>
</feature>
<feature type="binding site" evidence="1">
    <location>
        <position position="70"/>
    </location>
    <ligand>
        <name>substrate</name>
    </ligand>
</feature>
<feature type="binding site" evidence="1">
    <location>
        <position position="99"/>
    </location>
    <ligand>
        <name>substrate</name>
    </ligand>
</feature>
<sequence length="208" mass="23622">MMNFNNVFRWHLPFLFLVLLTFRAAAADTLLILGDSLSAGYRMSASAAWPALLNDKWQSKTSVVNASISGDTSQQGLARLPALLKQHQPRWVLVELGGNDGLRGFQPQQTEQTLRQILQDVKAANAEPLLMQIRLPANYGRRYNEAFSAIYPKLAKEFDVPLLPFFMEEVYLKPQWMQDDGIHPNRDAQPFIADWMAKQLQPLVNHDS</sequence>
<organism>
    <name type="scientific">Escherichia coli O6:H1 (strain CFT073 / ATCC 700928 / UPEC)</name>
    <dbReference type="NCBI Taxonomy" id="199310"/>
    <lineage>
        <taxon>Bacteria</taxon>
        <taxon>Pseudomonadati</taxon>
        <taxon>Pseudomonadota</taxon>
        <taxon>Gammaproteobacteria</taxon>
        <taxon>Enterobacterales</taxon>
        <taxon>Enterobacteriaceae</taxon>
        <taxon>Escherichia</taxon>
    </lineage>
</organism>
<proteinExistence type="inferred from homology"/>
<keyword id="KW-0378">Hydrolase</keyword>
<keyword id="KW-0574">Periplasm</keyword>
<keyword id="KW-0645">Protease</keyword>
<keyword id="KW-1185">Reference proteome</keyword>
<keyword id="KW-0732">Signal</keyword>